<accession>A5I4H8</accession>
<accession>A7G5M9</accession>
<proteinExistence type="inferred from homology"/>
<keyword id="KW-1003">Cell membrane</keyword>
<keyword id="KW-0255">Endonuclease</keyword>
<keyword id="KW-0378">Hydrolase</keyword>
<keyword id="KW-0472">Membrane</keyword>
<keyword id="KW-0540">Nuclease</keyword>
<keyword id="KW-1185">Reference proteome</keyword>
<keyword id="KW-0694">RNA-binding</keyword>
<keyword id="KW-0812">Transmembrane</keyword>
<keyword id="KW-1133">Transmembrane helix</keyword>
<dbReference type="EC" id="3.1.-.-" evidence="1"/>
<dbReference type="EMBL" id="CP000727">
    <property type="protein sequence ID" value="ABS37103.1"/>
    <property type="molecule type" value="Genomic_DNA"/>
</dbReference>
<dbReference type="EMBL" id="AM412317">
    <property type="protein sequence ID" value="CAL83950.1"/>
    <property type="molecule type" value="Genomic_DNA"/>
</dbReference>
<dbReference type="RefSeq" id="WP_011986783.1">
    <property type="nucleotide sequence ID" value="NC_009698.1"/>
</dbReference>
<dbReference type="RefSeq" id="YP_001254899.1">
    <property type="nucleotide sequence ID" value="NC_009495.1"/>
</dbReference>
<dbReference type="RefSeq" id="YP_001388094.1">
    <property type="nucleotide sequence ID" value="NC_009698.1"/>
</dbReference>
<dbReference type="GeneID" id="5186659"/>
<dbReference type="KEGG" id="cbh:CLC_2250"/>
<dbReference type="KEGG" id="cbo:CBO2404"/>
<dbReference type="PATRIC" id="fig|413999.7.peg.2380"/>
<dbReference type="HOGENOM" id="CLU_028328_1_0_9"/>
<dbReference type="PRO" id="PR:A5I4H8"/>
<dbReference type="Proteomes" id="UP000001986">
    <property type="component" value="Chromosome"/>
</dbReference>
<dbReference type="GO" id="GO:0005886">
    <property type="term" value="C:plasma membrane"/>
    <property type="evidence" value="ECO:0007669"/>
    <property type="project" value="UniProtKB-SubCell"/>
</dbReference>
<dbReference type="GO" id="GO:0003723">
    <property type="term" value="F:RNA binding"/>
    <property type="evidence" value="ECO:0007669"/>
    <property type="project" value="UniProtKB-UniRule"/>
</dbReference>
<dbReference type="GO" id="GO:0004521">
    <property type="term" value="F:RNA endonuclease activity"/>
    <property type="evidence" value="ECO:0007669"/>
    <property type="project" value="UniProtKB-UniRule"/>
</dbReference>
<dbReference type="GO" id="GO:0006402">
    <property type="term" value="P:mRNA catabolic process"/>
    <property type="evidence" value="ECO:0007669"/>
    <property type="project" value="UniProtKB-UniRule"/>
</dbReference>
<dbReference type="CDD" id="cd00077">
    <property type="entry name" value="HDc"/>
    <property type="match status" value="1"/>
</dbReference>
<dbReference type="CDD" id="cd22431">
    <property type="entry name" value="KH-I_RNaseY"/>
    <property type="match status" value="1"/>
</dbReference>
<dbReference type="FunFam" id="1.10.3210.10:FF:000003">
    <property type="entry name" value="Ribonuclease Y"/>
    <property type="match status" value="1"/>
</dbReference>
<dbReference type="FunFam" id="3.30.1370.10:FF:000006">
    <property type="entry name" value="Ribonuclease Y"/>
    <property type="match status" value="1"/>
</dbReference>
<dbReference type="Gene3D" id="1.10.3210.10">
    <property type="entry name" value="Hypothetical protein af1432"/>
    <property type="match status" value="1"/>
</dbReference>
<dbReference type="Gene3D" id="3.30.1370.10">
    <property type="entry name" value="K Homology domain, type 1"/>
    <property type="match status" value="1"/>
</dbReference>
<dbReference type="HAMAP" id="MF_00335">
    <property type="entry name" value="RNase_Y"/>
    <property type="match status" value="1"/>
</dbReference>
<dbReference type="InterPro" id="IPR003607">
    <property type="entry name" value="HD/PDEase_dom"/>
</dbReference>
<dbReference type="InterPro" id="IPR006674">
    <property type="entry name" value="HD_domain"/>
</dbReference>
<dbReference type="InterPro" id="IPR006675">
    <property type="entry name" value="HDIG_dom"/>
</dbReference>
<dbReference type="InterPro" id="IPR004087">
    <property type="entry name" value="KH_dom"/>
</dbReference>
<dbReference type="InterPro" id="IPR004088">
    <property type="entry name" value="KH_dom_type_1"/>
</dbReference>
<dbReference type="InterPro" id="IPR036612">
    <property type="entry name" value="KH_dom_type_1_sf"/>
</dbReference>
<dbReference type="InterPro" id="IPR017705">
    <property type="entry name" value="Ribonuclease_Y"/>
</dbReference>
<dbReference type="InterPro" id="IPR022711">
    <property type="entry name" value="RNase_Y_N"/>
</dbReference>
<dbReference type="NCBIfam" id="TIGR00277">
    <property type="entry name" value="HDIG"/>
    <property type="match status" value="1"/>
</dbReference>
<dbReference type="NCBIfam" id="TIGR03319">
    <property type="entry name" value="RNase_Y"/>
    <property type="match status" value="1"/>
</dbReference>
<dbReference type="PANTHER" id="PTHR12826">
    <property type="entry name" value="RIBONUCLEASE Y"/>
    <property type="match status" value="1"/>
</dbReference>
<dbReference type="PANTHER" id="PTHR12826:SF15">
    <property type="entry name" value="RIBONUCLEASE Y"/>
    <property type="match status" value="1"/>
</dbReference>
<dbReference type="Pfam" id="PF01966">
    <property type="entry name" value="HD"/>
    <property type="match status" value="1"/>
</dbReference>
<dbReference type="Pfam" id="PF00013">
    <property type="entry name" value="KH_1"/>
    <property type="match status" value="1"/>
</dbReference>
<dbReference type="Pfam" id="PF12072">
    <property type="entry name" value="RNase_Y_N"/>
    <property type="match status" value="1"/>
</dbReference>
<dbReference type="SMART" id="SM00471">
    <property type="entry name" value="HDc"/>
    <property type="match status" value="1"/>
</dbReference>
<dbReference type="SMART" id="SM00322">
    <property type="entry name" value="KH"/>
    <property type="match status" value="1"/>
</dbReference>
<dbReference type="SUPFAM" id="SSF54791">
    <property type="entry name" value="Eukaryotic type KH-domain (KH-domain type I)"/>
    <property type="match status" value="1"/>
</dbReference>
<dbReference type="SUPFAM" id="SSF109604">
    <property type="entry name" value="HD-domain/PDEase-like"/>
    <property type="match status" value="1"/>
</dbReference>
<dbReference type="PROSITE" id="PS51831">
    <property type="entry name" value="HD"/>
    <property type="match status" value="1"/>
</dbReference>
<dbReference type="PROSITE" id="PS50084">
    <property type="entry name" value="KH_TYPE_1"/>
    <property type="match status" value="1"/>
</dbReference>
<sequence>MGPTKYIIIAVVIIIICVILGLYIVDKKAKEKLSEASKEARRLKEEAERDAEAKKKEAILEAKEEAHKLRAEVERENRERRNEVQRLERRIIQKEEALDKKSEALENKEEALNKKQQKIEDVETHMEELHEKQRTELERISGLTTEQAKEFLLEQVRKEVKHETAVMIKEIETKAKEEADKRAREVITYAIQRCAADHVAETTVHVVNLPNDEMKGRIIGREGRNIRTLETLTGVDLIIDDTPEAVILSGFDPIRREVARIALEKLIVDGRIHPARIEEMVEKAKKEVEISIKEEGEQATFETGIHGLHIELIRLLGRLKYRTSYGQNVLKHSIEVSHLAGLMASELGIDPTLAKRVGLLHDIGKAVDHEVEGPHAIIGSEIAKKYRESALVVNAIGAHHGDMEPQSLEAILVQAADAISAARPGARRETLEAYIKRLEKLEEIANECEGVEKSYAIQAGREIRIMVKPEVLDDTGCIEMARNIVKQIESELEYPGQIKVNVIRETRAIEYAK</sequence>
<organism>
    <name type="scientific">Clostridium botulinum (strain Hall / ATCC 3502 / NCTC 13319 / Type A)</name>
    <dbReference type="NCBI Taxonomy" id="441771"/>
    <lineage>
        <taxon>Bacteria</taxon>
        <taxon>Bacillati</taxon>
        <taxon>Bacillota</taxon>
        <taxon>Clostridia</taxon>
        <taxon>Eubacteriales</taxon>
        <taxon>Clostridiaceae</taxon>
        <taxon>Clostridium</taxon>
    </lineage>
</organism>
<evidence type="ECO:0000255" key="1">
    <source>
        <dbReference type="HAMAP-Rule" id="MF_00335"/>
    </source>
</evidence>
<evidence type="ECO:0000255" key="2">
    <source>
        <dbReference type="PROSITE-ProRule" id="PRU01175"/>
    </source>
</evidence>
<reference key="1">
    <citation type="journal article" date="2007" name="Genome Res.">
        <title>Genome sequence of a proteolytic (Group I) Clostridium botulinum strain Hall A and comparative analysis of the clostridial genomes.</title>
        <authorList>
            <person name="Sebaihia M."/>
            <person name="Peck M.W."/>
            <person name="Minton N.P."/>
            <person name="Thomson N.R."/>
            <person name="Holden M.T.G."/>
            <person name="Mitchell W.J."/>
            <person name="Carter A.T."/>
            <person name="Bentley S.D."/>
            <person name="Mason D.R."/>
            <person name="Crossman L."/>
            <person name="Paul C.J."/>
            <person name="Ivens A."/>
            <person name="Wells-Bennik M.H.J."/>
            <person name="Davis I.J."/>
            <person name="Cerdeno-Tarraga A.M."/>
            <person name="Churcher C."/>
            <person name="Quail M.A."/>
            <person name="Chillingworth T."/>
            <person name="Feltwell T."/>
            <person name="Fraser A."/>
            <person name="Goodhead I."/>
            <person name="Hance Z."/>
            <person name="Jagels K."/>
            <person name="Larke N."/>
            <person name="Maddison M."/>
            <person name="Moule S."/>
            <person name="Mungall K."/>
            <person name="Norbertczak H."/>
            <person name="Rabbinowitsch E."/>
            <person name="Sanders M."/>
            <person name="Simmonds M."/>
            <person name="White B."/>
            <person name="Whithead S."/>
            <person name="Parkhill J."/>
        </authorList>
    </citation>
    <scope>NUCLEOTIDE SEQUENCE [LARGE SCALE GENOMIC DNA]</scope>
    <source>
        <strain>Hall / ATCC 3502 / NCTC 13319 / Type A</strain>
    </source>
</reference>
<reference key="2">
    <citation type="journal article" date="2007" name="PLoS ONE">
        <title>Analysis of the neurotoxin complex genes in Clostridium botulinum A1-A4 and B1 strains: BoNT/A3, /Ba4 and /B1 clusters are located within plasmids.</title>
        <authorList>
            <person name="Smith T.J."/>
            <person name="Hill K.K."/>
            <person name="Foley B.T."/>
            <person name="Detter J.C."/>
            <person name="Munk A.C."/>
            <person name="Bruce D.C."/>
            <person name="Doggett N.A."/>
            <person name="Smith L.A."/>
            <person name="Marks J.D."/>
            <person name="Xie G."/>
            <person name="Brettin T.S."/>
        </authorList>
    </citation>
    <scope>NUCLEOTIDE SEQUENCE [LARGE SCALE GENOMIC DNA]</scope>
    <source>
        <strain>Hall / ATCC 3502 / NCTC 13319 / Type A</strain>
    </source>
</reference>
<comment type="function">
    <text evidence="1">Endoribonuclease that initiates mRNA decay.</text>
</comment>
<comment type="subcellular location">
    <subcellularLocation>
        <location evidence="1">Cell membrane</location>
        <topology evidence="1">Single-pass membrane protein</topology>
    </subcellularLocation>
</comment>
<comment type="similarity">
    <text evidence="1">Belongs to the RNase Y family.</text>
</comment>
<name>RNY_CLOBH</name>
<protein>
    <recommendedName>
        <fullName evidence="1">Ribonuclease Y</fullName>
        <shortName evidence="1">RNase Y</shortName>
        <ecNumber evidence="1">3.1.-.-</ecNumber>
    </recommendedName>
</protein>
<feature type="chain" id="PRO_0000344846" description="Ribonuclease Y">
    <location>
        <begin position="1"/>
        <end position="513"/>
    </location>
</feature>
<feature type="transmembrane region" description="Helical" evidence="1">
    <location>
        <begin position="6"/>
        <end position="26"/>
    </location>
</feature>
<feature type="domain" description="KH" evidence="1">
    <location>
        <begin position="203"/>
        <end position="288"/>
    </location>
</feature>
<feature type="domain" description="HD" evidence="2">
    <location>
        <begin position="329"/>
        <end position="422"/>
    </location>
</feature>
<gene>
    <name evidence="1" type="primary">rny</name>
    <name type="ordered locus">CBO2404</name>
    <name type="ordered locus">CLC_2250</name>
</gene>